<feature type="chain" id="PRO_0000163890" description="tRNA dimethylallyltransferase">
    <location>
        <begin position="1"/>
        <end position="315"/>
    </location>
</feature>
<feature type="region of interest" description="Interaction with substrate tRNA" evidence="1">
    <location>
        <begin position="40"/>
        <end position="43"/>
    </location>
</feature>
<feature type="region of interest" description="Interaction with substrate tRNA" evidence="1">
    <location>
        <begin position="162"/>
        <end position="166"/>
    </location>
</feature>
<feature type="binding site" evidence="1">
    <location>
        <begin position="15"/>
        <end position="22"/>
    </location>
    <ligand>
        <name>ATP</name>
        <dbReference type="ChEBI" id="CHEBI:30616"/>
    </ligand>
</feature>
<feature type="binding site" evidence="1">
    <location>
        <begin position="17"/>
        <end position="22"/>
    </location>
    <ligand>
        <name>substrate</name>
    </ligand>
</feature>
<feature type="site" description="Interaction with substrate tRNA" evidence="1">
    <location>
        <position position="106"/>
    </location>
</feature>
<feature type="site" description="Interaction with substrate tRNA" evidence="1">
    <location>
        <position position="128"/>
    </location>
</feature>
<dbReference type="EC" id="2.5.1.75" evidence="1"/>
<dbReference type="EMBL" id="BA000003">
    <property type="protein sequence ID" value="BAB13259.1"/>
    <property type="status" value="ALT_FRAME"/>
    <property type="molecule type" value="Genomic_DNA"/>
</dbReference>
<dbReference type="RefSeq" id="NP_240373.1">
    <property type="nucleotide sequence ID" value="NC_002528.1"/>
</dbReference>
<dbReference type="RefSeq" id="WP_010896166.1">
    <property type="nucleotide sequence ID" value="NZ_AP036055.1"/>
</dbReference>
<dbReference type="SMR" id="P57632"/>
<dbReference type="STRING" id="563178.BUAP5A_562"/>
<dbReference type="EnsemblBacteria" id="BAB13259">
    <property type="protein sequence ID" value="BAB13259"/>
    <property type="gene ID" value="BAB13259"/>
</dbReference>
<dbReference type="KEGG" id="buc:BU569"/>
<dbReference type="PATRIC" id="fig|107806.10.peg.572"/>
<dbReference type="eggNOG" id="COG0324">
    <property type="taxonomic scope" value="Bacteria"/>
</dbReference>
<dbReference type="HOGENOM" id="CLU_032616_0_0_6"/>
<dbReference type="Proteomes" id="UP000001806">
    <property type="component" value="Chromosome"/>
</dbReference>
<dbReference type="GO" id="GO:0005524">
    <property type="term" value="F:ATP binding"/>
    <property type="evidence" value="ECO:0007669"/>
    <property type="project" value="UniProtKB-UniRule"/>
</dbReference>
<dbReference type="GO" id="GO:0052381">
    <property type="term" value="F:tRNA dimethylallyltransferase activity"/>
    <property type="evidence" value="ECO:0007669"/>
    <property type="project" value="UniProtKB-UniRule"/>
</dbReference>
<dbReference type="GO" id="GO:0006400">
    <property type="term" value="P:tRNA modification"/>
    <property type="evidence" value="ECO:0007669"/>
    <property type="project" value="TreeGrafter"/>
</dbReference>
<dbReference type="Gene3D" id="1.10.20.140">
    <property type="match status" value="1"/>
</dbReference>
<dbReference type="Gene3D" id="3.40.50.300">
    <property type="entry name" value="P-loop containing nucleotide triphosphate hydrolases"/>
    <property type="match status" value="1"/>
</dbReference>
<dbReference type="HAMAP" id="MF_00185">
    <property type="entry name" value="IPP_trans"/>
    <property type="match status" value="1"/>
</dbReference>
<dbReference type="InterPro" id="IPR039657">
    <property type="entry name" value="Dimethylallyltransferase"/>
</dbReference>
<dbReference type="InterPro" id="IPR018022">
    <property type="entry name" value="IPT"/>
</dbReference>
<dbReference type="InterPro" id="IPR027417">
    <property type="entry name" value="P-loop_NTPase"/>
</dbReference>
<dbReference type="NCBIfam" id="TIGR00174">
    <property type="entry name" value="miaA"/>
    <property type="match status" value="1"/>
</dbReference>
<dbReference type="PANTHER" id="PTHR11088">
    <property type="entry name" value="TRNA DIMETHYLALLYLTRANSFERASE"/>
    <property type="match status" value="1"/>
</dbReference>
<dbReference type="PANTHER" id="PTHR11088:SF60">
    <property type="entry name" value="TRNA DIMETHYLALLYLTRANSFERASE"/>
    <property type="match status" value="1"/>
</dbReference>
<dbReference type="Pfam" id="PF01715">
    <property type="entry name" value="IPPT"/>
    <property type="match status" value="1"/>
</dbReference>
<dbReference type="SUPFAM" id="SSF52540">
    <property type="entry name" value="P-loop containing nucleoside triphosphate hydrolases"/>
    <property type="match status" value="1"/>
</dbReference>
<protein>
    <recommendedName>
        <fullName evidence="1">tRNA dimethylallyltransferase</fullName>
        <ecNumber evidence="1">2.5.1.75</ecNumber>
    </recommendedName>
    <alternativeName>
        <fullName evidence="1">Dimethylallyl diphosphate:tRNA dimethylallyltransferase</fullName>
        <shortName evidence="1">DMAPP:tRNA dimethylallyltransferase</shortName>
        <shortName evidence="1">DMATase</shortName>
    </alternativeName>
    <alternativeName>
        <fullName evidence="1">Isopentenyl-diphosphate:tRNA isopentenyltransferase</fullName>
        <shortName evidence="1">IPP transferase</shortName>
        <shortName evidence="1">IPPT</shortName>
        <shortName evidence="1">IPTase</shortName>
    </alternativeName>
</protein>
<gene>
    <name evidence="1" type="primary">miaA</name>
    <name type="ordered locus">BU569</name>
</gene>
<evidence type="ECO:0000255" key="1">
    <source>
        <dbReference type="HAMAP-Rule" id="MF_00185"/>
    </source>
</evidence>
<comment type="function">
    <text evidence="1">Catalyzes the transfer of a dimethylallyl group onto the adenine at position 37 in tRNAs that read codons beginning with uridine, leading to the formation of N6-(dimethylallyl)adenosine (i(6)A).</text>
</comment>
<comment type="catalytic activity">
    <reaction evidence="1">
        <text>adenosine(37) in tRNA + dimethylallyl diphosphate = N(6)-dimethylallyladenosine(37) in tRNA + diphosphate</text>
        <dbReference type="Rhea" id="RHEA:26482"/>
        <dbReference type="Rhea" id="RHEA-COMP:10162"/>
        <dbReference type="Rhea" id="RHEA-COMP:10375"/>
        <dbReference type="ChEBI" id="CHEBI:33019"/>
        <dbReference type="ChEBI" id="CHEBI:57623"/>
        <dbReference type="ChEBI" id="CHEBI:74411"/>
        <dbReference type="ChEBI" id="CHEBI:74415"/>
        <dbReference type="EC" id="2.5.1.75"/>
    </reaction>
</comment>
<comment type="cofactor">
    <cofactor evidence="1">
        <name>Mg(2+)</name>
        <dbReference type="ChEBI" id="CHEBI:18420"/>
    </cofactor>
</comment>
<comment type="subunit">
    <text evidence="1">Monomer.</text>
</comment>
<comment type="similarity">
    <text evidence="1">Belongs to the IPP transferase family.</text>
</comment>
<keyword id="KW-0067">ATP-binding</keyword>
<keyword id="KW-0460">Magnesium</keyword>
<keyword id="KW-0547">Nucleotide-binding</keyword>
<keyword id="KW-1185">Reference proteome</keyword>
<keyword id="KW-0808">Transferase</keyword>
<keyword id="KW-0819">tRNA processing</keyword>
<organism>
    <name type="scientific">Buchnera aphidicola subsp. Acyrthosiphon pisum (strain APS)</name>
    <name type="common">Acyrthosiphon pisum symbiotic bacterium</name>
    <dbReference type="NCBI Taxonomy" id="107806"/>
    <lineage>
        <taxon>Bacteria</taxon>
        <taxon>Pseudomonadati</taxon>
        <taxon>Pseudomonadota</taxon>
        <taxon>Gammaproteobacteria</taxon>
        <taxon>Enterobacterales</taxon>
        <taxon>Erwiniaceae</taxon>
        <taxon>Buchnera</taxon>
    </lineage>
</organism>
<reference key="1">
    <citation type="journal article" date="2000" name="Nature">
        <title>Genome sequence of the endocellular bacterial symbiont of aphids Buchnera sp. APS.</title>
        <authorList>
            <person name="Shigenobu S."/>
            <person name="Watanabe H."/>
            <person name="Hattori M."/>
            <person name="Sakaki Y."/>
            <person name="Ishikawa H."/>
        </authorList>
    </citation>
    <scope>NUCLEOTIDE SEQUENCE [LARGE SCALE GENOMIC DNA]</scope>
    <source>
        <strain>APS</strain>
    </source>
</reference>
<name>MIAA_BUCAI</name>
<accession>P57632</accession>
<proteinExistence type="inferred from homology"/>
<sequence>MNFYKKKPVVIFLMGPTACGKSQLAICLRKYLSIELISVDSALIYRGMDIGTDKPSFSDLYNHPHRLLNIKDPVENYSAAEFQKDVLREIDEIIKLGKIPCLVGGSMFYYNVLLHGLSILPPSNIKLREYLIQKSYEKNYLYKKLKLIDPISASRIHKNDFQRLIRALEIFYLSGKSLTELKKKNNYKLPYNIFQFAIIPPNKEWLNNKIELRIKKMLMLGFQKEVEILFLRGDLHKNLPSIRCIGYRQMWEYLEYKNSYKDMFNKIIHATRKLAKHQLTWLKNWKNINKIEYHSTSTILAKKVLDVLEKNDFSV</sequence>